<name>SYS_SALTI</name>
<sequence length="430" mass="48580">MLDPNLLRNEPDAVAEKLARRGFKLDVDKLRALEERRKVLQVNTENLQAERNSRSKSIGQAKARGEDIEPLRLEVNKLGEELDAAKAELDTLLAEIRDIALTIPNLPADEVPVGKDENDNVEVSRWGTPREFDFEIRDHVTLGEMHSGLDFAAAVKLTGSRFVVMKGQIARMHRALSQFMLDLHTEQHGYSENYVPYLVNHDTLYGTGQLPKFAGDLFHTRPLEEEADSSNYALIPTAEVPLTNLVRDEIIDEDQLPIKMTAHTPCFRSEAGSYGRDTRGLIRMHQFDKVEMVQIVRPEDSMAALEEMTGHAEKVLQLLGLPYRKIILCTGDMGFGACKTYDLEVWVPAQNTYREISSCSNVWDFQARRMQARCRSKSDKKTRLVHTLNGSGLAVGRTLVAVMENYQQADGRIEVPEVLRPYMNGLEYIG</sequence>
<evidence type="ECO:0000255" key="1">
    <source>
        <dbReference type="HAMAP-Rule" id="MF_00176"/>
    </source>
</evidence>
<gene>
    <name evidence="1" type="primary">serS</name>
    <name type="ordered locus">STY0961</name>
    <name type="ordered locus">t1971</name>
</gene>
<protein>
    <recommendedName>
        <fullName evidence="1">Serine--tRNA ligase</fullName>
        <ecNumber evidence="1">6.1.1.11</ecNumber>
    </recommendedName>
    <alternativeName>
        <fullName evidence="1">Seryl-tRNA synthetase</fullName>
        <shortName evidence="1">SerRS</shortName>
    </alternativeName>
    <alternativeName>
        <fullName evidence="1">Seryl-tRNA(Ser/Sec) synthetase</fullName>
    </alternativeName>
</protein>
<feature type="chain" id="PRO_0000122113" description="Serine--tRNA ligase">
    <location>
        <begin position="1"/>
        <end position="430"/>
    </location>
</feature>
<feature type="binding site" evidence="1">
    <location>
        <begin position="237"/>
        <end position="239"/>
    </location>
    <ligand>
        <name>L-serine</name>
        <dbReference type="ChEBI" id="CHEBI:33384"/>
    </ligand>
</feature>
<feature type="binding site" evidence="1">
    <location>
        <begin position="268"/>
        <end position="270"/>
    </location>
    <ligand>
        <name>ATP</name>
        <dbReference type="ChEBI" id="CHEBI:30616"/>
    </ligand>
</feature>
<feature type="binding site" evidence="1">
    <location>
        <position position="291"/>
    </location>
    <ligand>
        <name>L-serine</name>
        <dbReference type="ChEBI" id="CHEBI:33384"/>
    </ligand>
</feature>
<feature type="binding site" evidence="1">
    <location>
        <begin position="355"/>
        <end position="358"/>
    </location>
    <ligand>
        <name>ATP</name>
        <dbReference type="ChEBI" id="CHEBI:30616"/>
    </ligand>
</feature>
<feature type="binding site" evidence="1">
    <location>
        <position position="391"/>
    </location>
    <ligand>
        <name>L-serine</name>
        <dbReference type="ChEBI" id="CHEBI:33384"/>
    </ligand>
</feature>
<organism>
    <name type="scientific">Salmonella typhi</name>
    <dbReference type="NCBI Taxonomy" id="90370"/>
    <lineage>
        <taxon>Bacteria</taxon>
        <taxon>Pseudomonadati</taxon>
        <taxon>Pseudomonadota</taxon>
        <taxon>Gammaproteobacteria</taxon>
        <taxon>Enterobacterales</taxon>
        <taxon>Enterobacteriaceae</taxon>
        <taxon>Salmonella</taxon>
    </lineage>
</organism>
<comment type="function">
    <text evidence="1">Catalyzes the attachment of serine to tRNA(Ser). Is also able to aminoacylate tRNA(Sec) with serine, to form the misacylated tRNA L-seryl-tRNA(Sec), which will be further converted into selenocysteinyl-tRNA(Sec).</text>
</comment>
<comment type="catalytic activity">
    <reaction evidence="1">
        <text>tRNA(Ser) + L-serine + ATP = L-seryl-tRNA(Ser) + AMP + diphosphate + H(+)</text>
        <dbReference type="Rhea" id="RHEA:12292"/>
        <dbReference type="Rhea" id="RHEA-COMP:9669"/>
        <dbReference type="Rhea" id="RHEA-COMP:9703"/>
        <dbReference type="ChEBI" id="CHEBI:15378"/>
        <dbReference type="ChEBI" id="CHEBI:30616"/>
        <dbReference type="ChEBI" id="CHEBI:33019"/>
        <dbReference type="ChEBI" id="CHEBI:33384"/>
        <dbReference type="ChEBI" id="CHEBI:78442"/>
        <dbReference type="ChEBI" id="CHEBI:78533"/>
        <dbReference type="ChEBI" id="CHEBI:456215"/>
        <dbReference type="EC" id="6.1.1.11"/>
    </reaction>
</comment>
<comment type="catalytic activity">
    <reaction evidence="1">
        <text>tRNA(Sec) + L-serine + ATP = L-seryl-tRNA(Sec) + AMP + diphosphate + H(+)</text>
        <dbReference type="Rhea" id="RHEA:42580"/>
        <dbReference type="Rhea" id="RHEA-COMP:9742"/>
        <dbReference type="Rhea" id="RHEA-COMP:10128"/>
        <dbReference type="ChEBI" id="CHEBI:15378"/>
        <dbReference type="ChEBI" id="CHEBI:30616"/>
        <dbReference type="ChEBI" id="CHEBI:33019"/>
        <dbReference type="ChEBI" id="CHEBI:33384"/>
        <dbReference type="ChEBI" id="CHEBI:78442"/>
        <dbReference type="ChEBI" id="CHEBI:78533"/>
        <dbReference type="ChEBI" id="CHEBI:456215"/>
        <dbReference type="EC" id="6.1.1.11"/>
    </reaction>
</comment>
<comment type="pathway">
    <text evidence="1">Aminoacyl-tRNA biosynthesis; selenocysteinyl-tRNA(Sec) biosynthesis; L-seryl-tRNA(Sec) from L-serine and tRNA(Sec): step 1/1.</text>
</comment>
<comment type="subunit">
    <text evidence="1">Homodimer. The tRNA molecule binds across the dimer.</text>
</comment>
<comment type="subcellular location">
    <subcellularLocation>
        <location evidence="1">Cytoplasm</location>
    </subcellularLocation>
</comment>
<comment type="domain">
    <text evidence="1">Consists of two distinct domains, a catalytic core and a N-terminal extension that is involved in tRNA binding.</text>
</comment>
<comment type="similarity">
    <text evidence="1">Belongs to the class-II aminoacyl-tRNA synthetase family. Type-1 seryl-tRNA synthetase subfamily.</text>
</comment>
<keyword id="KW-0030">Aminoacyl-tRNA synthetase</keyword>
<keyword id="KW-0067">ATP-binding</keyword>
<keyword id="KW-0963">Cytoplasm</keyword>
<keyword id="KW-0436">Ligase</keyword>
<keyword id="KW-0547">Nucleotide-binding</keyword>
<keyword id="KW-0648">Protein biosynthesis</keyword>
<reference key="1">
    <citation type="journal article" date="2001" name="Nature">
        <title>Complete genome sequence of a multiple drug resistant Salmonella enterica serovar Typhi CT18.</title>
        <authorList>
            <person name="Parkhill J."/>
            <person name="Dougan G."/>
            <person name="James K.D."/>
            <person name="Thomson N.R."/>
            <person name="Pickard D."/>
            <person name="Wain J."/>
            <person name="Churcher C.M."/>
            <person name="Mungall K.L."/>
            <person name="Bentley S.D."/>
            <person name="Holden M.T.G."/>
            <person name="Sebaihia M."/>
            <person name="Baker S."/>
            <person name="Basham D."/>
            <person name="Brooks K."/>
            <person name="Chillingworth T."/>
            <person name="Connerton P."/>
            <person name="Cronin A."/>
            <person name="Davis P."/>
            <person name="Davies R.M."/>
            <person name="Dowd L."/>
            <person name="White N."/>
            <person name="Farrar J."/>
            <person name="Feltwell T."/>
            <person name="Hamlin N."/>
            <person name="Haque A."/>
            <person name="Hien T.T."/>
            <person name="Holroyd S."/>
            <person name="Jagels K."/>
            <person name="Krogh A."/>
            <person name="Larsen T.S."/>
            <person name="Leather S."/>
            <person name="Moule S."/>
            <person name="O'Gaora P."/>
            <person name="Parry C."/>
            <person name="Quail M.A."/>
            <person name="Rutherford K.M."/>
            <person name="Simmonds M."/>
            <person name="Skelton J."/>
            <person name="Stevens K."/>
            <person name="Whitehead S."/>
            <person name="Barrell B.G."/>
        </authorList>
    </citation>
    <scope>NUCLEOTIDE SEQUENCE [LARGE SCALE GENOMIC DNA]</scope>
    <source>
        <strain>CT18</strain>
    </source>
</reference>
<reference key="2">
    <citation type="journal article" date="2003" name="J. Bacteriol.">
        <title>Comparative genomics of Salmonella enterica serovar Typhi strains Ty2 and CT18.</title>
        <authorList>
            <person name="Deng W."/>
            <person name="Liou S.-R."/>
            <person name="Plunkett G. III"/>
            <person name="Mayhew G.F."/>
            <person name="Rose D.J."/>
            <person name="Burland V."/>
            <person name="Kodoyianni V."/>
            <person name="Schwartz D.C."/>
            <person name="Blattner F.R."/>
        </authorList>
    </citation>
    <scope>NUCLEOTIDE SEQUENCE [LARGE SCALE GENOMIC DNA]</scope>
    <source>
        <strain>ATCC 700931 / Ty2</strain>
    </source>
</reference>
<dbReference type="EC" id="6.1.1.11" evidence="1"/>
<dbReference type="EMBL" id="AL513382">
    <property type="protein sequence ID" value="CAD05363.1"/>
    <property type="molecule type" value="Genomic_DNA"/>
</dbReference>
<dbReference type="EMBL" id="AE014613">
    <property type="protein sequence ID" value="AAO69584.1"/>
    <property type="molecule type" value="Genomic_DNA"/>
</dbReference>
<dbReference type="RefSeq" id="NP_455451.1">
    <property type="nucleotide sequence ID" value="NC_003198.1"/>
</dbReference>
<dbReference type="RefSeq" id="WP_000886697.1">
    <property type="nucleotide sequence ID" value="NZ_WSUR01000013.1"/>
</dbReference>
<dbReference type="SMR" id="P67564"/>
<dbReference type="STRING" id="220341.gene:17584954"/>
<dbReference type="KEGG" id="stt:t1971"/>
<dbReference type="KEGG" id="sty:STY0961"/>
<dbReference type="PATRIC" id="fig|220341.7.peg.969"/>
<dbReference type="eggNOG" id="COG0172">
    <property type="taxonomic scope" value="Bacteria"/>
</dbReference>
<dbReference type="HOGENOM" id="CLU_023797_1_1_6"/>
<dbReference type="OMA" id="GYTPCFR"/>
<dbReference type="OrthoDB" id="9804647at2"/>
<dbReference type="UniPathway" id="UPA00906">
    <property type="reaction ID" value="UER00895"/>
</dbReference>
<dbReference type="Proteomes" id="UP000000541">
    <property type="component" value="Chromosome"/>
</dbReference>
<dbReference type="Proteomes" id="UP000002670">
    <property type="component" value="Chromosome"/>
</dbReference>
<dbReference type="GO" id="GO:0005737">
    <property type="term" value="C:cytoplasm"/>
    <property type="evidence" value="ECO:0007669"/>
    <property type="project" value="UniProtKB-SubCell"/>
</dbReference>
<dbReference type="GO" id="GO:0005524">
    <property type="term" value="F:ATP binding"/>
    <property type="evidence" value="ECO:0007669"/>
    <property type="project" value="UniProtKB-UniRule"/>
</dbReference>
<dbReference type="GO" id="GO:0004828">
    <property type="term" value="F:serine-tRNA ligase activity"/>
    <property type="evidence" value="ECO:0007669"/>
    <property type="project" value="UniProtKB-UniRule"/>
</dbReference>
<dbReference type="GO" id="GO:0016260">
    <property type="term" value="P:selenocysteine biosynthetic process"/>
    <property type="evidence" value="ECO:0007669"/>
    <property type="project" value="UniProtKB-UniRule"/>
</dbReference>
<dbReference type="GO" id="GO:0006434">
    <property type="term" value="P:seryl-tRNA aminoacylation"/>
    <property type="evidence" value="ECO:0007669"/>
    <property type="project" value="UniProtKB-UniRule"/>
</dbReference>
<dbReference type="CDD" id="cd00770">
    <property type="entry name" value="SerRS_core"/>
    <property type="match status" value="1"/>
</dbReference>
<dbReference type="FunFam" id="1.10.287.40:FF:000001">
    <property type="entry name" value="Serine--tRNA ligase"/>
    <property type="match status" value="1"/>
</dbReference>
<dbReference type="FunFam" id="3.30.930.10:FF:000018">
    <property type="entry name" value="Serine--tRNA ligase"/>
    <property type="match status" value="1"/>
</dbReference>
<dbReference type="Gene3D" id="3.30.930.10">
    <property type="entry name" value="Bira Bifunctional Protein, Domain 2"/>
    <property type="match status" value="1"/>
</dbReference>
<dbReference type="Gene3D" id="1.10.287.40">
    <property type="entry name" value="Serine-tRNA synthetase, tRNA binding domain"/>
    <property type="match status" value="1"/>
</dbReference>
<dbReference type="HAMAP" id="MF_00176">
    <property type="entry name" value="Ser_tRNA_synth_type1"/>
    <property type="match status" value="1"/>
</dbReference>
<dbReference type="InterPro" id="IPR002314">
    <property type="entry name" value="aa-tRNA-synt_IIb"/>
</dbReference>
<dbReference type="InterPro" id="IPR006195">
    <property type="entry name" value="aa-tRNA-synth_II"/>
</dbReference>
<dbReference type="InterPro" id="IPR045864">
    <property type="entry name" value="aa-tRNA-synth_II/BPL/LPL"/>
</dbReference>
<dbReference type="InterPro" id="IPR002317">
    <property type="entry name" value="Ser-tRNA-ligase_type_1"/>
</dbReference>
<dbReference type="InterPro" id="IPR015866">
    <property type="entry name" value="Ser-tRNA-synth_1_N"/>
</dbReference>
<dbReference type="InterPro" id="IPR042103">
    <property type="entry name" value="SerRS_1_N_sf"/>
</dbReference>
<dbReference type="InterPro" id="IPR033729">
    <property type="entry name" value="SerRS_core"/>
</dbReference>
<dbReference type="InterPro" id="IPR010978">
    <property type="entry name" value="tRNA-bd_arm"/>
</dbReference>
<dbReference type="NCBIfam" id="TIGR00414">
    <property type="entry name" value="serS"/>
    <property type="match status" value="1"/>
</dbReference>
<dbReference type="PANTHER" id="PTHR43697:SF1">
    <property type="entry name" value="SERINE--TRNA LIGASE"/>
    <property type="match status" value="1"/>
</dbReference>
<dbReference type="PANTHER" id="PTHR43697">
    <property type="entry name" value="SERYL-TRNA SYNTHETASE"/>
    <property type="match status" value="1"/>
</dbReference>
<dbReference type="Pfam" id="PF02403">
    <property type="entry name" value="Seryl_tRNA_N"/>
    <property type="match status" value="1"/>
</dbReference>
<dbReference type="Pfam" id="PF00587">
    <property type="entry name" value="tRNA-synt_2b"/>
    <property type="match status" value="1"/>
</dbReference>
<dbReference type="PIRSF" id="PIRSF001529">
    <property type="entry name" value="Ser-tRNA-synth_IIa"/>
    <property type="match status" value="1"/>
</dbReference>
<dbReference type="PRINTS" id="PR00981">
    <property type="entry name" value="TRNASYNTHSER"/>
</dbReference>
<dbReference type="SUPFAM" id="SSF55681">
    <property type="entry name" value="Class II aaRS and biotin synthetases"/>
    <property type="match status" value="1"/>
</dbReference>
<dbReference type="SUPFAM" id="SSF46589">
    <property type="entry name" value="tRNA-binding arm"/>
    <property type="match status" value="1"/>
</dbReference>
<dbReference type="PROSITE" id="PS50862">
    <property type="entry name" value="AA_TRNA_LIGASE_II"/>
    <property type="match status" value="1"/>
</dbReference>
<accession>P67564</accession>
<accession>Q8XGN9</accession>
<proteinExistence type="inferred from homology"/>